<evidence type="ECO:0000255" key="1"/>
<evidence type="ECO:0000256" key="2">
    <source>
        <dbReference type="SAM" id="MobiDB-lite"/>
    </source>
</evidence>
<name>GRA5_TOXGO</name>
<protein>
    <recommendedName>
        <fullName>Dense granule protein 5</fullName>
        <shortName>Protein GRA 5</shortName>
    </recommendedName>
    <alternativeName>
        <fullName>p21</fullName>
    </alternativeName>
</protein>
<sequence length="120" mass="12977">MASVKRVVVAVMIVNVLALIFVGVAGSTRDVGSGGDDSEGARGREQQQVQQHEQNEDRSLFERGRAAVTGHPVRTAVGLAAAVVAVVSLLRLLKRRRRRAIQEESKESATAEEEEVAEEE</sequence>
<organism>
    <name type="scientific">Toxoplasma gondii</name>
    <dbReference type="NCBI Taxonomy" id="5811"/>
    <lineage>
        <taxon>Eukaryota</taxon>
        <taxon>Sar</taxon>
        <taxon>Alveolata</taxon>
        <taxon>Apicomplexa</taxon>
        <taxon>Conoidasida</taxon>
        <taxon>Coccidia</taxon>
        <taxon>Eucoccidiorida</taxon>
        <taxon>Eimeriorina</taxon>
        <taxon>Sarcocystidae</taxon>
        <taxon>Toxoplasma</taxon>
    </lineage>
</organism>
<gene>
    <name type="primary">GRA5</name>
</gene>
<accession>Q07828</accession>
<reference key="1">
    <citation type="journal article" date="1993" name="Mol. Biochem. Parasitol.">
        <title>Molecular structure of a Toxoplasma gondii dense granule antigen (GRA 5) associated with the parasitophorous vacuole membrane.</title>
        <authorList>
            <person name="Lecordier L."/>
            <person name="Mercier C."/>
            <person name="Torpier G."/>
            <person name="Tourvieille B."/>
            <person name="Darcy F."/>
            <person name="Liu J.-L."/>
            <person name="Maes P."/>
            <person name="Tartar A."/>
            <person name="Capron A."/>
            <person name="Cesbron-Delauw M.-F."/>
        </authorList>
    </citation>
    <scope>NUCLEOTIDE SEQUENCE [GENOMIC DNA]</scope>
    <scope>PROTEIN SEQUENCE OF 30-42; 45-63; 66-74 AND 100-113</scope>
    <source>
        <strain>RH</strain>
        <tissue>Tachyzoite</tissue>
    </source>
</reference>
<reference key="2">
    <citation type="submission" date="1997-07" db="UniProtKB">
        <authorList>
            <person name="Lecordier L."/>
        </authorList>
    </citation>
    <scope>SEQUENCE REVISION TO C-TERMINUS</scope>
</reference>
<comment type="function">
    <text>Plays a role in the function of the cyst and parasitophorous vacuole membranes and therefore in host-parasite interactions.</text>
</comment>
<comment type="subcellular location">
    <subcellularLocation>
        <location>Secreted</location>
    </subcellularLocation>
    <subcellularLocation>
        <location>Parasitophorous vacuole lumen</location>
    </subcellularLocation>
    <subcellularLocation>
        <location>Parasitophorous vacuole membrane</location>
    </subcellularLocation>
    <subcellularLocation>
        <location>Cytoplasmic vesicle</location>
        <location>Secretory vesicle</location>
    </subcellularLocation>
    <text>Located in dense granules of tachyzoites. Upon infection, secreted into the cyst and the parasitophorous vacuole (PV).</text>
</comment>
<keyword id="KW-0968">Cytoplasmic vesicle</keyword>
<keyword id="KW-0903">Direct protein sequencing</keyword>
<keyword id="KW-0472">Membrane</keyword>
<keyword id="KW-0964">Secreted</keyword>
<keyword id="KW-0732">Signal</keyword>
<keyword id="KW-0812">Transmembrane</keyword>
<keyword id="KW-1133">Transmembrane helix</keyword>
<dbReference type="EMBL" id="L06091">
    <property type="protein sequence ID" value="AAB63601.1"/>
    <property type="molecule type" value="Genomic_DNA"/>
</dbReference>
<dbReference type="SMR" id="Q07828"/>
<dbReference type="VEuPathDB" id="ToxoDB:TGCAST_286450"/>
<dbReference type="VEuPathDB" id="ToxoDB:TGFOU_286450"/>
<dbReference type="VEuPathDB" id="ToxoDB:TGGT1_286450"/>
<dbReference type="VEuPathDB" id="ToxoDB:TGRH88_025740"/>
<dbReference type="VEuPathDB" id="ToxoDB:TGVAND_286450"/>
<dbReference type="GO" id="GO:0016020">
    <property type="term" value="C:membrane"/>
    <property type="evidence" value="ECO:0007669"/>
    <property type="project" value="UniProtKB-KW"/>
</dbReference>
<dbReference type="GO" id="GO:0020005">
    <property type="term" value="C:symbiont-containing vacuole membrane"/>
    <property type="evidence" value="ECO:0007669"/>
    <property type="project" value="UniProtKB-SubCell"/>
</dbReference>
<dbReference type="GO" id="GO:0030133">
    <property type="term" value="C:transport vesicle"/>
    <property type="evidence" value="ECO:0007669"/>
    <property type="project" value="UniProtKB-SubCell"/>
</dbReference>
<feature type="signal peptide" evidence="1">
    <location>
        <begin position="1"/>
        <end position="25"/>
    </location>
</feature>
<feature type="chain" id="PRO_0000021370" description="Dense granule protein 5">
    <location>
        <begin position="26"/>
        <end position="120"/>
    </location>
</feature>
<feature type="transmembrane region" description="Helical" evidence="1">
    <location>
        <begin position="76"/>
        <end position="93"/>
    </location>
</feature>
<feature type="region of interest" description="Disordered" evidence="2">
    <location>
        <begin position="27"/>
        <end position="59"/>
    </location>
</feature>
<feature type="region of interest" description="Disordered" evidence="2">
    <location>
        <begin position="100"/>
        <end position="120"/>
    </location>
</feature>
<feature type="compositionally biased region" description="Basic and acidic residues" evidence="2">
    <location>
        <begin position="100"/>
        <end position="109"/>
    </location>
</feature>
<feature type="compositionally biased region" description="Acidic residues" evidence="2">
    <location>
        <begin position="110"/>
        <end position="120"/>
    </location>
</feature>
<proteinExistence type="evidence at protein level"/>